<keyword id="KW-0066">ATP synthesis</keyword>
<keyword id="KW-0067">ATP-binding</keyword>
<keyword id="KW-1003">Cell membrane</keyword>
<keyword id="KW-0139">CF(1)</keyword>
<keyword id="KW-0375">Hydrogen ion transport</keyword>
<keyword id="KW-0406">Ion transport</keyword>
<keyword id="KW-0472">Membrane</keyword>
<keyword id="KW-0547">Nucleotide-binding</keyword>
<keyword id="KW-1185">Reference proteome</keyword>
<keyword id="KW-1278">Translocase</keyword>
<keyword id="KW-0813">Transport</keyword>
<reference key="1">
    <citation type="submission" date="2006-06" db="EMBL/GenBank/DDBJ databases">
        <title>Complete sequence of Rubrobacter xylanophilus DSM 9941.</title>
        <authorList>
            <consortium name="US DOE Joint Genome Institute"/>
            <person name="Copeland A."/>
            <person name="Lucas S."/>
            <person name="Lapidus A."/>
            <person name="Barry K."/>
            <person name="Detter J.C."/>
            <person name="Glavina del Rio T."/>
            <person name="Hammon N."/>
            <person name="Israni S."/>
            <person name="Dalin E."/>
            <person name="Tice H."/>
            <person name="Pitluck S."/>
            <person name="Munk A.C."/>
            <person name="Brettin T."/>
            <person name="Bruce D."/>
            <person name="Han C."/>
            <person name="Tapia R."/>
            <person name="Gilna P."/>
            <person name="Schmutz J."/>
            <person name="Larimer F."/>
            <person name="Land M."/>
            <person name="Hauser L."/>
            <person name="Kyrpides N."/>
            <person name="Lykidis A."/>
            <person name="da Costa M.S."/>
            <person name="Rainey F.A."/>
            <person name="Empadinhas N."/>
            <person name="Jolivet E."/>
            <person name="Battista J.R."/>
            <person name="Richardson P."/>
        </authorList>
    </citation>
    <scope>NUCLEOTIDE SEQUENCE [LARGE SCALE GENOMIC DNA]</scope>
    <source>
        <strain>DSM 9941 / JCM 11954 / NBRC 16129 / PRD-1</strain>
    </source>
</reference>
<dbReference type="EC" id="7.1.2.2" evidence="1"/>
<dbReference type="EMBL" id="CP000386">
    <property type="protein sequence ID" value="ABG04601.1"/>
    <property type="molecule type" value="Genomic_DNA"/>
</dbReference>
<dbReference type="RefSeq" id="WP_011564618.1">
    <property type="nucleotide sequence ID" value="NC_008148.1"/>
</dbReference>
<dbReference type="SMR" id="Q1AVH7"/>
<dbReference type="STRING" id="266117.Rxyl_1640"/>
<dbReference type="KEGG" id="rxy:Rxyl_1640"/>
<dbReference type="eggNOG" id="COG0056">
    <property type="taxonomic scope" value="Bacteria"/>
</dbReference>
<dbReference type="HOGENOM" id="CLU_010091_2_1_11"/>
<dbReference type="OrthoDB" id="9803053at2"/>
<dbReference type="PhylomeDB" id="Q1AVH7"/>
<dbReference type="Proteomes" id="UP000006637">
    <property type="component" value="Chromosome"/>
</dbReference>
<dbReference type="GO" id="GO:0005886">
    <property type="term" value="C:plasma membrane"/>
    <property type="evidence" value="ECO:0007669"/>
    <property type="project" value="UniProtKB-SubCell"/>
</dbReference>
<dbReference type="GO" id="GO:0045259">
    <property type="term" value="C:proton-transporting ATP synthase complex"/>
    <property type="evidence" value="ECO:0007669"/>
    <property type="project" value="UniProtKB-KW"/>
</dbReference>
<dbReference type="GO" id="GO:0043531">
    <property type="term" value="F:ADP binding"/>
    <property type="evidence" value="ECO:0007669"/>
    <property type="project" value="TreeGrafter"/>
</dbReference>
<dbReference type="GO" id="GO:0005524">
    <property type="term" value="F:ATP binding"/>
    <property type="evidence" value="ECO:0007669"/>
    <property type="project" value="UniProtKB-UniRule"/>
</dbReference>
<dbReference type="GO" id="GO:0046933">
    <property type="term" value="F:proton-transporting ATP synthase activity, rotational mechanism"/>
    <property type="evidence" value="ECO:0007669"/>
    <property type="project" value="UniProtKB-UniRule"/>
</dbReference>
<dbReference type="CDD" id="cd18113">
    <property type="entry name" value="ATP-synt_F1_alpha_C"/>
    <property type="match status" value="1"/>
</dbReference>
<dbReference type="CDD" id="cd18116">
    <property type="entry name" value="ATP-synt_F1_alpha_N"/>
    <property type="match status" value="1"/>
</dbReference>
<dbReference type="CDD" id="cd01132">
    <property type="entry name" value="F1-ATPase_alpha_CD"/>
    <property type="match status" value="1"/>
</dbReference>
<dbReference type="FunFam" id="1.20.150.20:FF:000001">
    <property type="entry name" value="ATP synthase subunit alpha"/>
    <property type="match status" value="1"/>
</dbReference>
<dbReference type="FunFam" id="2.40.30.20:FF:000001">
    <property type="entry name" value="ATP synthase subunit alpha"/>
    <property type="match status" value="1"/>
</dbReference>
<dbReference type="FunFam" id="3.40.50.300:FF:000002">
    <property type="entry name" value="ATP synthase subunit alpha"/>
    <property type="match status" value="1"/>
</dbReference>
<dbReference type="Gene3D" id="2.40.30.20">
    <property type="match status" value="1"/>
</dbReference>
<dbReference type="Gene3D" id="1.20.150.20">
    <property type="entry name" value="ATP synthase alpha/beta chain, C-terminal domain"/>
    <property type="match status" value="1"/>
</dbReference>
<dbReference type="Gene3D" id="3.40.50.300">
    <property type="entry name" value="P-loop containing nucleotide triphosphate hydrolases"/>
    <property type="match status" value="1"/>
</dbReference>
<dbReference type="HAMAP" id="MF_01346">
    <property type="entry name" value="ATP_synth_alpha_bact"/>
    <property type="match status" value="1"/>
</dbReference>
<dbReference type="InterPro" id="IPR023366">
    <property type="entry name" value="ATP_synth_asu-like_sf"/>
</dbReference>
<dbReference type="InterPro" id="IPR000793">
    <property type="entry name" value="ATP_synth_asu_C"/>
</dbReference>
<dbReference type="InterPro" id="IPR038376">
    <property type="entry name" value="ATP_synth_asu_C_sf"/>
</dbReference>
<dbReference type="InterPro" id="IPR033732">
    <property type="entry name" value="ATP_synth_F1_a_nt-bd_dom"/>
</dbReference>
<dbReference type="InterPro" id="IPR005294">
    <property type="entry name" value="ATP_synth_F1_asu"/>
</dbReference>
<dbReference type="InterPro" id="IPR020003">
    <property type="entry name" value="ATPase_a/bsu_AS"/>
</dbReference>
<dbReference type="InterPro" id="IPR004100">
    <property type="entry name" value="ATPase_F1/V1/A1_a/bsu_N"/>
</dbReference>
<dbReference type="InterPro" id="IPR036121">
    <property type="entry name" value="ATPase_F1/V1/A1_a/bsu_N_sf"/>
</dbReference>
<dbReference type="InterPro" id="IPR000194">
    <property type="entry name" value="ATPase_F1/V1/A1_a/bsu_nucl-bd"/>
</dbReference>
<dbReference type="InterPro" id="IPR027417">
    <property type="entry name" value="P-loop_NTPase"/>
</dbReference>
<dbReference type="NCBIfam" id="TIGR00962">
    <property type="entry name" value="atpA"/>
    <property type="match status" value="1"/>
</dbReference>
<dbReference type="NCBIfam" id="NF009884">
    <property type="entry name" value="PRK13343.1"/>
    <property type="match status" value="1"/>
</dbReference>
<dbReference type="PANTHER" id="PTHR48082">
    <property type="entry name" value="ATP SYNTHASE SUBUNIT ALPHA, MITOCHONDRIAL"/>
    <property type="match status" value="1"/>
</dbReference>
<dbReference type="PANTHER" id="PTHR48082:SF2">
    <property type="entry name" value="ATP SYNTHASE SUBUNIT ALPHA, MITOCHONDRIAL"/>
    <property type="match status" value="1"/>
</dbReference>
<dbReference type="Pfam" id="PF00006">
    <property type="entry name" value="ATP-synt_ab"/>
    <property type="match status" value="1"/>
</dbReference>
<dbReference type="Pfam" id="PF00306">
    <property type="entry name" value="ATP-synt_ab_C"/>
    <property type="match status" value="1"/>
</dbReference>
<dbReference type="Pfam" id="PF02874">
    <property type="entry name" value="ATP-synt_ab_N"/>
    <property type="match status" value="1"/>
</dbReference>
<dbReference type="PIRSF" id="PIRSF039088">
    <property type="entry name" value="F_ATPase_subunit_alpha"/>
    <property type="match status" value="1"/>
</dbReference>
<dbReference type="SUPFAM" id="SSF47917">
    <property type="entry name" value="C-terminal domain of alpha and beta subunits of F1 ATP synthase"/>
    <property type="match status" value="1"/>
</dbReference>
<dbReference type="SUPFAM" id="SSF50615">
    <property type="entry name" value="N-terminal domain of alpha and beta subunits of F1 ATP synthase"/>
    <property type="match status" value="1"/>
</dbReference>
<dbReference type="SUPFAM" id="SSF52540">
    <property type="entry name" value="P-loop containing nucleoside triphosphate hydrolases"/>
    <property type="match status" value="1"/>
</dbReference>
<dbReference type="PROSITE" id="PS00152">
    <property type="entry name" value="ATPASE_ALPHA_BETA"/>
    <property type="match status" value="1"/>
</dbReference>
<accession>Q1AVH7</accession>
<comment type="function">
    <text evidence="1">Produces ATP from ADP in the presence of a proton gradient across the membrane. The alpha chain is a regulatory subunit.</text>
</comment>
<comment type="catalytic activity">
    <reaction evidence="1">
        <text>ATP + H2O + 4 H(+)(in) = ADP + phosphate + 5 H(+)(out)</text>
        <dbReference type="Rhea" id="RHEA:57720"/>
        <dbReference type="ChEBI" id="CHEBI:15377"/>
        <dbReference type="ChEBI" id="CHEBI:15378"/>
        <dbReference type="ChEBI" id="CHEBI:30616"/>
        <dbReference type="ChEBI" id="CHEBI:43474"/>
        <dbReference type="ChEBI" id="CHEBI:456216"/>
        <dbReference type="EC" id="7.1.2.2"/>
    </reaction>
</comment>
<comment type="subunit">
    <text evidence="1">F-type ATPases have 2 components, CF(1) - the catalytic core - and CF(0) - the membrane proton channel. CF(1) has five subunits: alpha(3), beta(3), gamma(1), delta(1), epsilon(1). CF(0) has three main subunits: a(1), b(2) and c(9-12). The alpha and beta chains form an alternating ring which encloses part of the gamma chain. CF(1) is attached to CF(0) by a central stalk formed by the gamma and epsilon chains, while a peripheral stalk is formed by the delta and b chains.</text>
</comment>
<comment type="subcellular location">
    <subcellularLocation>
        <location evidence="1">Cell membrane</location>
        <topology evidence="1">Peripheral membrane protein</topology>
    </subcellularLocation>
</comment>
<comment type="similarity">
    <text evidence="1">Belongs to the ATPase alpha/beta chains family.</text>
</comment>
<proteinExistence type="inferred from homology"/>
<name>ATPA_RUBXD</name>
<protein>
    <recommendedName>
        <fullName evidence="1">ATP synthase subunit alpha</fullName>
        <ecNumber evidence="1">7.1.2.2</ecNumber>
    </recommendedName>
    <alternativeName>
        <fullName evidence="1">ATP synthase F1 sector subunit alpha</fullName>
    </alternativeName>
    <alternativeName>
        <fullName evidence="1">F-ATPase subunit alpha</fullName>
    </alternativeName>
</protein>
<sequence>MGRLRPEEISSILKGAITDYESRVRTEEVGQVLEVGDGIARVHGLSNVMYQEMVEFEDARGEKVIGLALNLEEDNVGVIIAGDDRYILEGSTVRRTGRLASVPVGQGVLGRVINALGQPIDGRGEIQAEETRPVEIIAPGIIRRKDVDTPLQTGIKAIDSMIPIGRGQRELIIGDRKTGKTALAVDTIINQHDQNVKCIYVAVGQKDSAVAGVVAQLEEYGAMEYTTVINASASQPAPLQYLAPYAGCAIGEYFMHRGEDALVIYDDLSKHAVAYRQMMLLLRRPPGREAYPGDIFYLHSRLLERAARMSEEYGGGSLTALPIIETKAGDISAYIPTNVISITDGQIFLDLDLFNANQRPAIDVGLSVSRVGSSAQIKAMKKVAGTLKLDLSQYRELASFAQFGSDLDKATQETLARGERLTALLKQRERDPMPVEEQVAVIFGGTQGLLREVEPDDVPDWEAQLREYLRSSHEDLLKDIREKKELTDETAERLREAIERFNEGFEPARSEVKVETRPQEEEGEEG</sequence>
<feature type="chain" id="PRO_0000256110" description="ATP synthase subunit alpha">
    <location>
        <begin position="1"/>
        <end position="526"/>
    </location>
</feature>
<feature type="region of interest" description="Disordered" evidence="2">
    <location>
        <begin position="505"/>
        <end position="526"/>
    </location>
</feature>
<feature type="compositionally biased region" description="Basic and acidic residues" evidence="2">
    <location>
        <begin position="505"/>
        <end position="520"/>
    </location>
</feature>
<feature type="binding site" evidence="1">
    <location>
        <begin position="174"/>
        <end position="181"/>
    </location>
    <ligand>
        <name>ATP</name>
        <dbReference type="ChEBI" id="CHEBI:30616"/>
    </ligand>
</feature>
<feature type="site" description="Required for activity" evidence="1">
    <location>
        <position position="367"/>
    </location>
</feature>
<evidence type="ECO:0000255" key="1">
    <source>
        <dbReference type="HAMAP-Rule" id="MF_01346"/>
    </source>
</evidence>
<evidence type="ECO:0000256" key="2">
    <source>
        <dbReference type="SAM" id="MobiDB-lite"/>
    </source>
</evidence>
<gene>
    <name evidence="1" type="primary">atpA</name>
    <name type="ordered locus">Rxyl_1640</name>
</gene>
<organism>
    <name type="scientific">Rubrobacter xylanophilus (strain DSM 9941 / JCM 11954 / NBRC 16129 / PRD-1)</name>
    <dbReference type="NCBI Taxonomy" id="266117"/>
    <lineage>
        <taxon>Bacteria</taxon>
        <taxon>Bacillati</taxon>
        <taxon>Actinomycetota</taxon>
        <taxon>Rubrobacteria</taxon>
        <taxon>Rubrobacterales</taxon>
        <taxon>Rubrobacteraceae</taxon>
        <taxon>Rubrobacter</taxon>
    </lineage>
</organism>